<feature type="chain" id="PRO_0000370993" description="ATP synthase subunit delta">
    <location>
        <begin position="1"/>
        <end position="177"/>
    </location>
</feature>
<gene>
    <name evidence="1" type="primary">atpH</name>
    <name type="ordered locus">CGSHiEE_00575</name>
</gene>
<keyword id="KW-0066">ATP synthesis</keyword>
<keyword id="KW-0997">Cell inner membrane</keyword>
<keyword id="KW-1003">Cell membrane</keyword>
<keyword id="KW-0139">CF(1)</keyword>
<keyword id="KW-0375">Hydrogen ion transport</keyword>
<keyword id="KW-0406">Ion transport</keyword>
<keyword id="KW-0472">Membrane</keyword>
<keyword id="KW-0813">Transport</keyword>
<comment type="function">
    <text evidence="1">F(1)F(0) ATP synthase produces ATP from ADP in the presence of a proton or sodium gradient. F-type ATPases consist of two structural domains, F(1) containing the extramembraneous catalytic core and F(0) containing the membrane proton channel, linked together by a central stalk and a peripheral stalk. During catalysis, ATP synthesis in the catalytic domain of F(1) is coupled via a rotary mechanism of the central stalk subunits to proton translocation.</text>
</comment>
<comment type="function">
    <text evidence="1">This protein is part of the stalk that links CF(0) to CF(1). It either transmits conformational changes from CF(0) to CF(1) or is implicated in proton conduction.</text>
</comment>
<comment type="subunit">
    <text evidence="1">F-type ATPases have 2 components, F(1) - the catalytic core - and F(0) - the membrane proton channel. F(1) has five subunits: alpha(3), beta(3), gamma(1), delta(1), epsilon(1). F(0) has three main subunits: a(1), b(2) and c(10-14). The alpha and beta chains form an alternating ring which encloses part of the gamma chain. F(1) is attached to F(0) by a central stalk formed by the gamma and epsilon chains, while a peripheral stalk is formed by the delta and b chains.</text>
</comment>
<comment type="subcellular location">
    <subcellularLocation>
        <location evidence="1">Cell inner membrane</location>
        <topology evidence="1">Peripheral membrane protein</topology>
    </subcellularLocation>
</comment>
<comment type="similarity">
    <text evidence="1">Belongs to the ATPase delta chain family.</text>
</comment>
<organism>
    <name type="scientific">Haemophilus influenzae (strain PittEE)</name>
    <dbReference type="NCBI Taxonomy" id="374930"/>
    <lineage>
        <taxon>Bacteria</taxon>
        <taxon>Pseudomonadati</taxon>
        <taxon>Pseudomonadota</taxon>
        <taxon>Gammaproteobacteria</taxon>
        <taxon>Pasteurellales</taxon>
        <taxon>Pasteurellaceae</taxon>
        <taxon>Haemophilus</taxon>
    </lineage>
</organism>
<reference key="1">
    <citation type="journal article" date="2007" name="Genome Biol.">
        <title>Characterization and modeling of the Haemophilus influenzae core and supragenomes based on the complete genomic sequences of Rd and 12 clinical nontypeable strains.</title>
        <authorList>
            <person name="Hogg J.S."/>
            <person name="Hu F.Z."/>
            <person name="Janto B."/>
            <person name="Boissy R."/>
            <person name="Hayes J."/>
            <person name="Keefe R."/>
            <person name="Post J.C."/>
            <person name="Ehrlich G.D."/>
        </authorList>
    </citation>
    <scope>NUCLEOTIDE SEQUENCE [LARGE SCALE GENOMIC DNA]</scope>
    <source>
        <strain>PittEE</strain>
    </source>
</reference>
<proteinExistence type="inferred from homology"/>
<protein>
    <recommendedName>
        <fullName evidence="1">ATP synthase subunit delta</fullName>
    </recommendedName>
    <alternativeName>
        <fullName evidence="1">ATP synthase F(1) sector subunit delta</fullName>
    </alternativeName>
    <alternativeName>
        <fullName evidence="1">F-type ATPase subunit delta</fullName>
        <shortName evidence="1">F-ATPase subunit delta</shortName>
    </alternativeName>
</protein>
<dbReference type="EMBL" id="CP000671">
    <property type="protein sequence ID" value="ABQ97609.1"/>
    <property type="molecule type" value="Genomic_DNA"/>
</dbReference>
<dbReference type="SMR" id="A5UA08"/>
<dbReference type="KEGG" id="hip:CGSHiEE_00575"/>
<dbReference type="HOGENOM" id="CLU_085114_3_0_6"/>
<dbReference type="GO" id="GO:0005886">
    <property type="term" value="C:plasma membrane"/>
    <property type="evidence" value="ECO:0007669"/>
    <property type="project" value="UniProtKB-SubCell"/>
</dbReference>
<dbReference type="GO" id="GO:0045259">
    <property type="term" value="C:proton-transporting ATP synthase complex"/>
    <property type="evidence" value="ECO:0007669"/>
    <property type="project" value="UniProtKB-KW"/>
</dbReference>
<dbReference type="GO" id="GO:0046933">
    <property type="term" value="F:proton-transporting ATP synthase activity, rotational mechanism"/>
    <property type="evidence" value="ECO:0007669"/>
    <property type="project" value="UniProtKB-UniRule"/>
</dbReference>
<dbReference type="Gene3D" id="1.10.520.20">
    <property type="entry name" value="N-terminal domain of the delta subunit of the F1F0-ATP synthase"/>
    <property type="match status" value="1"/>
</dbReference>
<dbReference type="HAMAP" id="MF_01416">
    <property type="entry name" value="ATP_synth_delta_bact"/>
    <property type="match status" value="1"/>
</dbReference>
<dbReference type="InterPro" id="IPR026015">
    <property type="entry name" value="ATP_synth_OSCP/delta_N_sf"/>
</dbReference>
<dbReference type="InterPro" id="IPR020781">
    <property type="entry name" value="ATPase_OSCP/d_CS"/>
</dbReference>
<dbReference type="InterPro" id="IPR000711">
    <property type="entry name" value="ATPase_OSCP/dsu"/>
</dbReference>
<dbReference type="NCBIfam" id="TIGR01145">
    <property type="entry name" value="ATP_synt_delta"/>
    <property type="match status" value="1"/>
</dbReference>
<dbReference type="NCBIfam" id="NF004402">
    <property type="entry name" value="PRK05758.2-2"/>
    <property type="match status" value="1"/>
</dbReference>
<dbReference type="NCBIfam" id="NF004404">
    <property type="entry name" value="PRK05758.2-5"/>
    <property type="match status" value="1"/>
</dbReference>
<dbReference type="PANTHER" id="PTHR11910">
    <property type="entry name" value="ATP SYNTHASE DELTA CHAIN"/>
    <property type="match status" value="1"/>
</dbReference>
<dbReference type="Pfam" id="PF00213">
    <property type="entry name" value="OSCP"/>
    <property type="match status" value="1"/>
</dbReference>
<dbReference type="PRINTS" id="PR00125">
    <property type="entry name" value="ATPASEDELTA"/>
</dbReference>
<dbReference type="SUPFAM" id="SSF47928">
    <property type="entry name" value="N-terminal domain of the delta subunit of the F1F0-ATP synthase"/>
    <property type="match status" value="1"/>
</dbReference>
<dbReference type="PROSITE" id="PS00389">
    <property type="entry name" value="ATPASE_DELTA"/>
    <property type="match status" value="1"/>
</dbReference>
<sequence>MSELTTIARPYAKAAFDFAIEQSAVEKWTEMLGFAAAVAEDETVKAYLSSSLSAQKLADTVISICGEQLDQYGQNLIRLMAENKRLSAIPAVFEEFKHHVEEHQAIAEVEVTSAQPLNATQIEKIAAAMEKRLARKVKLNCNVDNALIAGVIIRTEDFVIDGSSRGQLTRLANELQL</sequence>
<accession>A5UA08</accession>
<name>ATPD_HAEIE</name>
<evidence type="ECO:0000255" key="1">
    <source>
        <dbReference type="HAMAP-Rule" id="MF_01416"/>
    </source>
</evidence>